<sequence length="123" mass="14076">MKRSYNFLSNSEKRKLRNRAKLDKSAERLRISIFKSNRHFYVQLINDVKGITLTSASTLDAKIKDVCKGKVNAETIKQVSSLMVERLSGMKLEQQLTFDRGAYKYTGLVSQFAEALRSSGFEF</sequence>
<proteinExistence type="inferred from homology"/>
<evidence type="ECO:0000255" key="1">
    <source>
        <dbReference type="HAMAP-Rule" id="MF_01337"/>
    </source>
</evidence>
<evidence type="ECO:0000305" key="2"/>
<protein>
    <recommendedName>
        <fullName evidence="1">Large ribosomal subunit protein uL18</fullName>
    </recommendedName>
    <alternativeName>
        <fullName evidence="2">50S ribosomal protein L18</fullName>
    </alternativeName>
</protein>
<name>RL18_WOLWR</name>
<keyword id="KW-0687">Ribonucleoprotein</keyword>
<keyword id="KW-0689">Ribosomal protein</keyword>
<keyword id="KW-0694">RNA-binding</keyword>
<keyword id="KW-0699">rRNA-binding</keyword>
<comment type="function">
    <text evidence="1">This is one of the proteins that bind and probably mediate the attachment of the 5S RNA into the large ribosomal subunit, where it forms part of the central protuberance.</text>
</comment>
<comment type="subunit">
    <text evidence="1">Part of the 50S ribosomal subunit; part of the 5S rRNA/L5/L18/L25 subcomplex. Contacts the 5S and 23S rRNAs.</text>
</comment>
<comment type="similarity">
    <text evidence="1">Belongs to the universal ribosomal protein uL18 family.</text>
</comment>
<gene>
    <name evidence="1" type="primary">rplR</name>
    <name type="ordered locus">WRi_005030</name>
</gene>
<reference key="1">
    <citation type="journal article" date="2009" name="Proc. Natl. Acad. Sci. U.S.A.">
        <title>The mosaic genome structure of the Wolbachia wRi strain infecting Drosophila simulans.</title>
        <authorList>
            <person name="Klasson L."/>
            <person name="Westberg J."/>
            <person name="Sapountzis P."/>
            <person name="Naeslund K."/>
            <person name="Lutnaes Y."/>
            <person name="Darby A.C."/>
            <person name="Veneti Z."/>
            <person name="Chen L."/>
            <person name="Braig H.R."/>
            <person name="Garrett R."/>
            <person name="Bourtzis K."/>
            <person name="Andersson S.G."/>
        </authorList>
    </citation>
    <scope>NUCLEOTIDE SEQUENCE [LARGE SCALE GENOMIC DNA]</scope>
    <source>
        <strain>wRi</strain>
    </source>
</reference>
<organism>
    <name type="scientific">Wolbachia sp. subsp. Drosophila simulans (strain wRi)</name>
    <dbReference type="NCBI Taxonomy" id="66084"/>
    <lineage>
        <taxon>Bacteria</taxon>
        <taxon>Pseudomonadati</taxon>
        <taxon>Pseudomonadota</taxon>
        <taxon>Alphaproteobacteria</taxon>
        <taxon>Rickettsiales</taxon>
        <taxon>Anaplasmataceae</taxon>
        <taxon>Wolbachieae</taxon>
        <taxon>Wolbachia</taxon>
    </lineage>
</organism>
<accession>C0R2Z3</accession>
<dbReference type="EMBL" id="CP001391">
    <property type="protein sequence ID" value="ACN95285.1"/>
    <property type="molecule type" value="Genomic_DNA"/>
</dbReference>
<dbReference type="RefSeq" id="WP_006279867.1">
    <property type="nucleotide sequence ID" value="NZ_MKIF01000201.1"/>
</dbReference>
<dbReference type="SMR" id="C0R2Z3"/>
<dbReference type="STRING" id="66084.WRi_005030"/>
<dbReference type="GeneID" id="70036148"/>
<dbReference type="KEGG" id="wri:WRi_005030"/>
<dbReference type="HOGENOM" id="CLU_098841_0_1_5"/>
<dbReference type="Proteomes" id="UP000001293">
    <property type="component" value="Chromosome"/>
</dbReference>
<dbReference type="GO" id="GO:0022625">
    <property type="term" value="C:cytosolic large ribosomal subunit"/>
    <property type="evidence" value="ECO:0007669"/>
    <property type="project" value="TreeGrafter"/>
</dbReference>
<dbReference type="GO" id="GO:0008097">
    <property type="term" value="F:5S rRNA binding"/>
    <property type="evidence" value="ECO:0007669"/>
    <property type="project" value="TreeGrafter"/>
</dbReference>
<dbReference type="GO" id="GO:0003735">
    <property type="term" value="F:structural constituent of ribosome"/>
    <property type="evidence" value="ECO:0007669"/>
    <property type="project" value="InterPro"/>
</dbReference>
<dbReference type="GO" id="GO:0006412">
    <property type="term" value="P:translation"/>
    <property type="evidence" value="ECO:0007669"/>
    <property type="project" value="UniProtKB-UniRule"/>
</dbReference>
<dbReference type="CDD" id="cd00432">
    <property type="entry name" value="Ribosomal_L18_L5e"/>
    <property type="match status" value="1"/>
</dbReference>
<dbReference type="Gene3D" id="3.30.420.100">
    <property type="match status" value="1"/>
</dbReference>
<dbReference type="HAMAP" id="MF_01337_B">
    <property type="entry name" value="Ribosomal_uL18_B"/>
    <property type="match status" value="1"/>
</dbReference>
<dbReference type="InterPro" id="IPR004389">
    <property type="entry name" value="Ribosomal_uL18_bac-type"/>
</dbReference>
<dbReference type="InterPro" id="IPR005484">
    <property type="entry name" value="Ribosomal_uL18_bac/euk"/>
</dbReference>
<dbReference type="NCBIfam" id="TIGR00060">
    <property type="entry name" value="L18_bact"/>
    <property type="match status" value="1"/>
</dbReference>
<dbReference type="PANTHER" id="PTHR12899">
    <property type="entry name" value="39S RIBOSOMAL PROTEIN L18, MITOCHONDRIAL"/>
    <property type="match status" value="1"/>
</dbReference>
<dbReference type="PANTHER" id="PTHR12899:SF3">
    <property type="entry name" value="LARGE RIBOSOMAL SUBUNIT PROTEIN UL18M"/>
    <property type="match status" value="1"/>
</dbReference>
<dbReference type="Pfam" id="PF00861">
    <property type="entry name" value="Ribosomal_L18p"/>
    <property type="match status" value="1"/>
</dbReference>
<dbReference type="SUPFAM" id="SSF53137">
    <property type="entry name" value="Translational machinery components"/>
    <property type="match status" value="1"/>
</dbReference>
<feature type="chain" id="PRO_1000166260" description="Large ribosomal subunit protein uL18">
    <location>
        <begin position="1"/>
        <end position="123"/>
    </location>
</feature>